<gene>
    <name evidence="1" type="primary">ilvD</name>
    <name type="ordered locus">Noc_2001</name>
</gene>
<dbReference type="EC" id="4.2.1.9" evidence="1"/>
<dbReference type="EMBL" id="CP000127">
    <property type="protein sequence ID" value="ABA58463.1"/>
    <property type="molecule type" value="Genomic_DNA"/>
</dbReference>
<dbReference type="RefSeq" id="WP_011330829.1">
    <property type="nucleotide sequence ID" value="NC_007484.1"/>
</dbReference>
<dbReference type="SMR" id="Q3J9N3"/>
<dbReference type="FunCoup" id="Q3J9N3">
    <property type="interactions" value="497"/>
</dbReference>
<dbReference type="STRING" id="323261.Noc_2001"/>
<dbReference type="KEGG" id="noc:Noc_2001"/>
<dbReference type="eggNOG" id="COG0129">
    <property type="taxonomic scope" value="Bacteria"/>
</dbReference>
<dbReference type="HOGENOM" id="CLU_014271_4_2_6"/>
<dbReference type="InParanoid" id="Q3J9N3"/>
<dbReference type="UniPathway" id="UPA00047">
    <property type="reaction ID" value="UER00057"/>
</dbReference>
<dbReference type="UniPathway" id="UPA00049">
    <property type="reaction ID" value="UER00061"/>
</dbReference>
<dbReference type="Proteomes" id="UP000006838">
    <property type="component" value="Chromosome"/>
</dbReference>
<dbReference type="GO" id="GO:0005829">
    <property type="term" value="C:cytosol"/>
    <property type="evidence" value="ECO:0007669"/>
    <property type="project" value="TreeGrafter"/>
</dbReference>
<dbReference type="GO" id="GO:0051537">
    <property type="term" value="F:2 iron, 2 sulfur cluster binding"/>
    <property type="evidence" value="ECO:0007669"/>
    <property type="project" value="UniProtKB-UniRule"/>
</dbReference>
<dbReference type="GO" id="GO:0004160">
    <property type="term" value="F:dihydroxy-acid dehydratase activity"/>
    <property type="evidence" value="ECO:0007669"/>
    <property type="project" value="UniProtKB-UniRule"/>
</dbReference>
<dbReference type="GO" id="GO:0000287">
    <property type="term" value="F:magnesium ion binding"/>
    <property type="evidence" value="ECO:0007669"/>
    <property type="project" value="UniProtKB-UniRule"/>
</dbReference>
<dbReference type="GO" id="GO:0009097">
    <property type="term" value="P:isoleucine biosynthetic process"/>
    <property type="evidence" value="ECO:0007669"/>
    <property type="project" value="UniProtKB-UniRule"/>
</dbReference>
<dbReference type="GO" id="GO:0009099">
    <property type="term" value="P:L-valine biosynthetic process"/>
    <property type="evidence" value="ECO:0007669"/>
    <property type="project" value="UniProtKB-UniRule"/>
</dbReference>
<dbReference type="FunFam" id="3.50.30.80:FF:000001">
    <property type="entry name" value="Dihydroxy-acid dehydratase"/>
    <property type="match status" value="1"/>
</dbReference>
<dbReference type="Gene3D" id="3.50.30.80">
    <property type="entry name" value="IlvD/EDD C-terminal domain-like"/>
    <property type="match status" value="1"/>
</dbReference>
<dbReference type="HAMAP" id="MF_00012">
    <property type="entry name" value="IlvD"/>
    <property type="match status" value="1"/>
</dbReference>
<dbReference type="InterPro" id="IPR042096">
    <property type="entry name" value="Dihydro-acid_dehy_C"/>
</dbReference>
<dbReference type="InterPro" id="IPR004404">
    <property type="entry name" value="DihydroxyA_deHydtase"/>
</dbReference>
<dbReference type="InterPro" id="IPR020558">
    <property type="entry name" value="DiOHA_6PGluconate_deHydtase_CS"/>
</dbReference>
<dbReference type="InterPro" id="IPR056740">
    <property type="entry name" value="ILV_EDD_C"/>
</dbReference>
<dbReference type="InterPro" id="IPR000581">
    <property type="entry name" value="ILV_EDD_N"/>
</dbReference>
<dbReference type="InterPro" id="IPR037237">
    <property type="entry name" value="IlvD/EDD_N"/>
</dbReference>
<dbReference type="NCBIfam" id="TIGR00110">
    <property type="entry name" value="ilvD"/>
    <property type="match status" value="1"/>
</dbReference>
<dbReference type="NCBIfam" id="NF009103">
    <property type="entry name" value="PRK12448.1"/>
    <property type="match status" value="1"/>
</dbReference>
<dbReference type="PANTHER" id="PTHR43661">
    <property type="entry name" value="D-XYLONATE DEHYDRATASE"/>
    <property type="match status" value="1"/>
</dbReference>
<dbReference type="PANTHER" id="PTHR43661:SF3">
    <property type="entry name" value="D-XYLONATE DEHYDRATASE YAGF-RELATED"/>
    <property type="match status" value="1"/>
</dbReference>
<dbReference type="Pfam" id="PF24877">
    <property type="entry name" value="ILV_EDD_C"/>
    <property type="match status" value="1"/>
</dbReference>
<dbReference type="Pfam" id="PF00920">
    <property type="entry name" value="ILVD_EDD_N"/>
    <property type="match status" value="1"/>
</dbReference>
<dbReference type="SUPFAM" id="SSF143975">
    <property type="entry name" value="IlvD/EDD N-terminal domain-like"/>
    <property type="match status" value="1"/>
</dbReference>
<dbReference type="SUPFAM" id="SSF52016">
    <property type="entry name" value="LeuD/IlvD-like"/>
    <property type="match status" value="1"/>
</dbReference>
<dbReference type="PROSITE" id="PS00886">
    <property type="entry name" value="ILVD_EDD_1"/>
    <property type="match status" value="1"/>
</dbReference>
<dbReference type="PROSITE" id="PS00887">
    <property type="entry name" value="ILVD_EDD_2"/>
    <property type="match status" value="1"/>
</dbReference>
<feature type="chain" id="PRO_0000225400" description="Dihydroxy-acid dehydratase">
    <location>
        <begin position="1"/>
        <end position="617"/>
    </location>
</feature>
<feature type="active site" description="Proton acceptor" evidence="1">
    <location>
        <position position="517"/>
    </location>
</feature>
<feature type="binding site" evidence="1">
    <location>
        <position position="81"/>
    </location>
    <ligand>
        <name>Mg(2+)</name>
        <dbReference type="ChEBI" id="CHEBI:18420"/>
    </ligand>
</feature>
<feature type="binding site" evidence="1">
    <location>
        <position position="122"/>
    </location>
    <ligand>
        <name>[2Fe-2S] cluster</name>
        <dbReference type="ChEBI" id="CHEBI:190135"/>
    </ligand>
</feature>
<feature type="binding site" evidence="1">
    <location>
        <position position="123"/>
    </location>
    <ligand>
        <name>Mg(2+)</name>
        <dbReference type="ChEBI" id="CHEBI:18420"/>
    </ligand>
</feature>
<feature type="binding site" description="via carbamate group" evidence="1">
    <location>
        <position position="124"/>
    </location>
    <ligand>
        <name>Mg(2+)</name>
        <dbReference type="ChEBI" id="CHEBI:18420"/>
    </ligand>
</feature>
<feature type="binding site" evidence="1">
    <location>
        <position position="195"/>
    </location>
    <ligand>
        <name>[2Fe-2S] cluster</name>
        <dbReference type="ChEBI" id="CHEBI:190135"/>
    </ligand>
</feature>
<feature type="binding site" evidence="1">
    <location>
        <position position="491"/>
    </location>
    <ligand>
        <name>Mg(2+)</name>
        <dbReference type="ChEBI" id="CHEBI:18420"/>
    </ligand>
</feature>
<feature type="modified residue" description="N6-carboxylysine" evidence="1">
    <location>
        <position position="124"/>
    </location>
</feature>
<reference key="1">
    <citation type="journal article" date="2006" name="Appl. Environ. Microbiol.">
        <title>Complete genome sequence of the marine, chemolithoautotrophic, ammonia-oxidizing bacterium Nitrosococcus oceani ATCC 19707.</title>
        <authorList>
            <person name="Klotz M.G."/>
            <person name="Arp D.J."/>
            <person name="Chain P.S.G."/>
            <person name="El-Sheikh A.F."/>
            <person name="Hauser L.J."/>
            <person name="Hommes N.G."/>
            <person name="Larimer F.W."/>
            <person name="Malfatti S.A."/>
            <person name="Norton J.M."/>
            <person name="Poret-Peterson A.T."/>
            <person name="Vergez L.M."/>
            <person name="Ward B.B."/>
        </authorList>
    </citation>
    <scope>NUCLEOTIDE SEQUENCE [LARGE SCALE GENOMIC DNA]</scope>
    <source>
        <strain>ATCC 19707 / BCRC 17464 / JCM 30415 / NCIMB 11848 / C-107</strain>
    </source>
</reference>
<proteinExistence type="inferred from homology"/>
<keyword id="KW-0001">2Fe-2S</keyword>
<keyword id="KW-0028">Amino-acid biosynthesis</keyword>
<keyword id="KW-0100">Branched-chain amino acid biosynthesis</keyword>
<keyword id="KW-0408">Iron</keyword>
<keyword id="KW-0411">Iron-sulfur</keyword>
<keyword id="KW-0456">Lyase</keyword>
<keyword id="KW-0460">Magnesium</keyword>
<keyword id="KW-0479">Metal-binding</keyword>
<keyword id="KW-1185">Reference proteome</keyword>
<organism>
    <name type="scientific">Nitrosococcus oceani (strain ATCC 19707 / BCRC 17464 / JCM 30415 / NCIMB 11848 / C-107)</name>
    <dbReference type="NCBI Taxonomy" id="323261"/>
    <lineage>
        <taxon>Bacteria</taxon>
        <taxon>Pseudomonadati</taxon>
        <taxon>Pseudomonadota</taxon>
        <taxon>Gammaproteobacteria</taxon>
        <taxon>Chromatiales</taxon>
        <taxon>Chromatiaceae</taxon>
        <taxon>Nitrosococcus</taxon>
    </lineage>
</organism>
<evidence type="ECO:0000255" key="1">
    <source>
        <dbReference type="HAMAP-Rule" id="MF_00012"/>
    </source>
</evidence>
<sequence length="617" mass="65597">MPAYRSRTTTHGRNMAGARALWRATGMKEGDFGKPIIAIANSFTQFVPGHVHLKDLGQLVAREIEKAGGVAKEFHTIAVDDGIAMGHSGMLYSLPSREIIADSVEYMVNAHCADALVCISNCDKITPGMLMAAMRLNIPAVFISGGPMEAGKVKIRGKSVSLDLVDAIVAAVDPAESDADVMAYERSACPTCGSCSGMFTANSMNCLTEALGLALPGNGSLLATHADRKELFLEAGRLIVALAKRYYEQDDETVLPRSIANFGAFENAMSLDIAMGGSTNTVLHLLAAAQEGGVDFTMADIDRLSRKVPNLCKVAPATPEYHMEDVHRAGGVISILGELDRAGLIHRQMATVHSPTLGAALDQWDIVRSSYEAAQSRYLAAPGGVPTQVAFSQGNRWESLDLDRAQGCIRDIAHAYSKDGGLAVLYGNLAKDGCIVKTAGVDPSILIFSGPARLFESQEAAIAAILGDKIQPGDVVLIRYEGPKGGPGMQEMLYPTSYLKSKGLGEVCALITDGRFSGGTSGLSIGHVSPEAAEGGTIGLVEEGDRIEIDIPHRRIHLAVDEEELAQRQRAMEAKAQQAWRPVNRNRTVSLALQAYAALTTSAAKGAVRDLGQLNRS</sequence>
<comment type="function">
    <text evidence="1">Functions in the biosynthesis of branched-chain amino acids. Catalyzes the dehydration of (2R,3R)-2,3-dihydroxy-3-methylpentanoate (2,3-dihydroxy-3-methylvalerate) into 2-oxo-3-methylpentanoate (2-oxo-3-methylvalerate) and of (2R)-2,3-dihydroxy-3-methylbutanoate (2,3-dihydroxyisovalerate) into 2-oxo-3-methylbutanoate (2-oxoisovalerate), the penultimate precursor to L-isoleucine and L-valine, respectively.</text>
</comment>
<comment type="catalytic activity">
    <reaction evidence="1">
        <text>(2R)-2,3-dihydroxy-3-methylbutanoate = 3-methyl-2-oxobutanoate + H2O</text>
        <dbReference type="Rhea" id="RHEA:24809"/>
        <dbReference type="ChEBI" id="CHEBI:11851"/>
        <dbReference type="ChEBI" id="CHEBI:15377"/>
        <dbReference type="ChEBI" id="CHEBI:49072"/>
        <dbReference type="EC" id="4.2.1.9"/>
    </reaction>
    <physiologicalReaction direction="left-to-right" evidence="1">
        <dbReference type="Rhea" id="RHEA:24810"/>
    </physiologicalReaction>
</comment>
<comment type="catalytic activity">
    <reaction evidence="1">
        <text>(2R,3R)-2,3-dihydroxy-3-methylpentanoate = (S)-3-methyl-2-oxopentanoate + H2O</text>
        <dbReference type="Rhea" id="RHEA:27694"/>
        <dbReference type="ChEBI" id="CHEBI:15377"/>
        <dbReference type="ChEBI" id="CHEBI:35146"/>
        <dbReference type="ChEBI" id="CHEBI:49258"/>
        <dbReference type="EC" id="4.2.1.9"/>
    </reaction>
    <physiologicalReaction direction="left-to-right" evidence="1">
        <dbReference type="Rhea" id="RHEA:27695"/>
    </physiologicalReaction>
</comment>
<comment type="cofactor">
    <cofactor evidence="1">
        <name>[2Fe-2S] cluster</name>
        <dbReference type="ChEBI" id="CHEBI:190135"/>
    </cofactor>
    <text evidence="1">Binds 1 [2Fe-2S] cluster per subunit. This cluster acts as a Lewis acid cofactor.</text>
</comment>
<comment type="cofactor">
    <cofactor evidence="1">
        <name>Mg(2+)</name>
        <dbReference type="ChEBI" id="CHEBI:18420"/>
    </cofactor>
</comment>
<comment type="pathway">
    <text evidence="1">Amino-acid biosynthesis; L-isoleucine biosynthesis; L-isoleucine from 2-oxobutanoate: step 3/4.</text>
</comment>
<comment type="pathway">
    <text evidence="1">Amino-acid biosynthesis; L-valine biosynthesis; L-valine from pyruvate: step 3/4.</text>
</comment>
<comment type="subunit">
    <text evidence="1">Homodimer.</text>
</comment>
<comment type="similarity">
    <text evidence="1">Belongs to the IlvD/Edd family.</text>
</comment>
<name>ILVD_NITOC</name>
<accession>Q3J9N3</accession>
<protein>
    <recommendedName>
        <fullName evidence="1">Dihydroxy-acid dehydratase</fullName>
        <shortName evidence="1">DAD</shortName>
        <ecNumber evidence="1">4.2.1.9</ecNumber>
    </recommendedName>
</protein>